<organism>
    <name type="scientific">Lysinibacillus sphaericus (strain C3-41)</name>
    <dbReference type="NCBI Taxonomy" id="444177"/>
    <lineage>
        <taxon>Bacteria</taxon>
        <taxon>Bacillati</taxon>
        <taxon>Bacillota</taxon>
        <taxon>Bacilli</taxon>
        <taxon>Bacillales</taxon>
        <taxon>Bacillaceae</taxon>
        <taxon>Lysinibacillus</taxon>
    </lineage>
</organism>
<name>HISZ_LYSSC</name>
<feature type="chain" id="PRO_1000117677" description="ATP phosphoribosyltransferase regulatory subunit">
    <location>
        <begin position="1"/>
        <end position="385"/>
    </location>
</feature>
<accession>B1HVP6</accession>
<sequence>MFEKPLGMRDTFPQIFEKVEAVRQTGRDFLTKRGYEFIKTPAVEYFDTVGKASAIADTHLFKLVDSQGNTLVLRPDMTTPIARVATSKLLKEMIPQRLAYFASVFRAQEAEGGRPAEFDQMGIELIGDQSVFADAEVIVTAMELLKHLKLEAFKVTIGHAGILNCILQDYTESIEQQTTLRTLLVHRNYVGFEEAVDSFNLPKAKADALLQFIEEAMDVKDIRDIEKYVRKNDALVYMQQLAQLLEMADLAAYVTFDFTLSSHMSYYTGMLFEVFALGSGFPLGNGGRYDGLLEVFGSKAGATGFSIRVDRLLETLHGQSEMQQEATVVLFDEEQFEAALIKVNTLRAAGKLATLQLRSSLVDEEAFLAHFTEVVVVGQEEIGSE</sequence>
<evidence type="ECO:0000255" key="1">
    <source>
        <dbReference type="HAMAP-Rule" id="MF_00125"/>
    </source>
</evidence>
<keyword id="KW-0028">Amino-acid biosynthesis</keyword>
<keyword id="KW-0963">Cytoplasm</keyword>
<keyword id="KW-0368">Histidine biosynthesis</keyword>
<reference key="1">
    <citation type="journal article" date="2008" name="J. Bacteriol.">
        <title>Complete genome sequence of the mosquitocidal bacterium Bacillus sphaericus C3-41 and comparison with those of closely related Bacillus species.</title>
        <authorList>
            <person name="Hu X."/>
            <person name="Fan W."/>
            <person name="Han B."/>
            <person name="Liu H."/>
            <person name="Zheng D."/>
            <person name="Li Q."/>
            <person name="Dong W."/>
            <person name="Yan J."/>
            <person name="Gao M."/>
            <person name="Berry C."/>
            <person name="Yuan Z."/>
        </authorList>
    </citation>
    <scope>NUCLEOTIDE SEQUENCE [LARGE SCALE GENOMIC DNA]</scope>
    <source>
        <strain>C3-41</strain>
    </source>
</reference>
<gene>
    <name evidence="1" type="primary">hisZ</name>
    <name type="ordered locus">Bsph_0438</name>
</gene>
<proteinExistence type="inferred from homology"/>
<protein>
    <recommendedName>
        <fullName evidence="1">ATP phosphoribosyltransferase regulatory subunit</fullName>
    </recommendedName>
</protein>
<dbReference type="EMBL" id="CP000817">
    <property type="protein sequence ID" value="ACA38065.1"/>
    <property type="molecule type" value="Genomic_DNA"/>
</dbReference>
<dbReference type="SMR" id="B1HVP6"/>
<dbReference type="EnsemblBacteria" id="ACA38065">
    <property type="protein sequence ID" value="ACA38065"/>
    <property type="gene ID" value="Bsph_0438"/>
</dbReference>
<dbReference type="KEGG" id="lsp:Bsph_0438"/>
<dbReference type="HOGENOM" id="CLU_025113_0_0_9"/>
<dbReference type="UniPathway" id="UPA00031">
    <property type="reaction ID" value="UER00006"/>
</dbReference>
<dbReference type="Proteomes" id="UP000002164">
    <property type="component" value="Chromosome"/>
</dbReference>
<dbReference type="GO" id="GO:0005737">
    <property type="term" value="C:cytoplasm"/>
    <property type="evidence" value="ECO:0007669"/>
    <property type="project" value="UniProtKB-SubCell"/>
</dbReference>
<dbReference type="GO" id="GO:0140096">
    <property type="term" value="F:catalytic activity, acting on a protein"/>
    <property type="evidence" value="ECO:0007669"/>
    <property type="project" value="UniProtKB-ARBA"/>
</dbReference>
<dbReference type="GO" id="GO:0004821">
    <property type="term" value="F:histidine-tRNA ligase activity"/>
    <property type="evidence" value="ECO:0007669"/>
    <property type="project" value="TreeGrafter"/>
</dbReference>
<dbReference type="GO" id="GO:0016740">
    <property type="term" value="F:transferase activity"/>
    <property type="evidence" value="ECO:0007669"/>
    <property type="project" value="UniProtKB-ARBA"/>
</dbReference>
<dbReference type="GO" id="GO:0006427">
    <property type="term" value="P:histidyl-tRNA aminoacylation"/>
    <property type="evidence" value="ECO:0007669"/>
    <property type="project" value="TreeGrafter"/>
</dbReference>
<dbReference type="GO" id="GO:0000105">
    <property type="term" value="P:L-histidine biosynthetic process"/>
    <property type="evidence" value="ECO:0007669"/>
    <property type="project" value="UniProtKB-UniRule"/>
</dbReference>
<dbReference type="CDD" id="cd00773">
    <property type="entry name" value="HisRS-like_core"/>
    <property type="match status" value="1"/>
</dbReference>
<dbReference type="Gene3D" id="3.30.930.10">
    <property type="entry name" value="Bira Bifunctional Protein, Domain 2"/>
    <property type="match status" value="1"/>
</dbReference>
<dbReference type="HAMAP" id="MF_00125">
    <property type="entry name" value="HisZ"/>
    <property type="match status" value="1"/>
</dbReference>
<dbReference type="InterPro" id="IPR006195">
    <property type="entry name" value="aa-tRNA-synth_II"/>
</dbReference>
<dbReference type="InterPro" id="IPR045864">
    <property type="entry name" value="aa-tRNA-synth_II/BPL/LPL"/>
</dbReference>
<dbReference type="InterPro" id="IPR041715">
    <property type="entry name" value="HisRS-like_core"/>
</dbReference>
<dbReference type="InterPro" id="IPR004516">
    <property type="entry name" value="HisRS/HisZ"/>
</dbReference>
<dbReference type="InterPro" id="IPR004517">
    <property type="entry name" value="HisZ"/>
</dbReference>
<dbReference type="NCBIfam" id="TIGR00443">
    <property type="entry name" value="hisZ_biosyn_reg"/>
    <property type="match status" value="1"/>
</dbReference>
<dbReference type="NCBIfam" id="NF008941">
    <property type="entry name" value="PRK12292.2-4"/>
    <property type="match status" value="1"/>
</dbReference>
<dbReference type="PANTHER" id="PTHR43707:SF1">
    <property type="entry name" value="HISTIDINE--TRNA LIGASE, MITOCHONDRIAL-RELATED"/>
    <property type="match status" value="1"/>
</dbReference>
<dbReference type="PANTHER" id="PTHR43707">
    <property type="entry name" value="HISTIDYL-TRNA SYNTHETASE"/>
    <property type="match status" value="1"/>
</dbReference>
<dbReference type="Pfam" id="PF13393">
    <property type="entry name" value="tRNA-synt_His"/>
    <property type="match status" value="1"/>
</dbReference>
<dbReference type="PIRSF" id="PIRSF001549">
    <property type="entry name" value="His-tRNA_synth"/>
    <property type="match status" value="1"/>
</dbReference>
<dbReference type="SUPFAM" id="SSF55681">
    <property type="entry name" value="Class II aaRS and biotin synthetases"/>
    <property type="match status" value="1"/>
</dbReference>
<dbReference type="PROSITE" id="PS50862">
    <property type="entry name" value="AA_TRNA_LIGASE_II"/>
    <property type="match status" value="1"/>
</dbReference>
<comment type="function">
    <text evidence="1">Required for the first step of histidine biosynthesis. May allow the feedback regulation of ATP phosphoribosyltransferase activity by histidine.</text>
</comment>
<comment type="pathway">
    <text evidence="1">Amino-acid biosynthesis; L-histidine biosynthesis; L-histidine from 5-phospho-alpha-D-ribose 1-diphosphate: step 1/9.</text>
</comment>
<comment type="subunit">
    <text evidence="1">Heteromultimer composed of HisG and HisZ subunits.</text>
</comment>
<comment type="subcellular location">
    <subcellularLocation>
        <location evidence="1">Cytoplasm</location>
    </subcellularLocation>
</comment>
<comment type="miscellaneous">
    <text>This function is generally fulfilled by the C-terminal part of HisG, which is missing in some bacteria such as this one.</text>
</comment>
<comment type="similarity">
    <text evidence="1">Belongs to the class-II aminoacyl-tRNA synthetase family. HisZ subfamily.</text>
</comment>